<keyword id="KW-0028">Amino-acid biosynthesis</keyword>
<keyword id="KW-0368">Histidine biosynthesis</keyword>
<keyword id="KW-0378">Hydrolase</keyword>
<keyword id="KW-0486">Methionine biosynthesis</keyword>
<keyword id="KW-0511">Multifunctional enzyme</keyword>
<keyword id="KW-0521">NADP</keyword>
<keyword id="KW-0554">One-carbon metabolism</keyword>
<keyword id="KW-0560">Oxidoreductase</keyword>
<keyword id="KW-0658">Purine biosynthesis</keyword>
<keyword id="KW-1185">Reference proteome</keyword>
<evidence type="ECO:0000255" key="1">
    <source>
        <dbReference type="HAMAP-Rule" id="MF_01576"/>
    </source>
</evidence>
<protein>
    <recommendedName>
        <fullName evidence="1">Bifunctional protein FolD</fullName>
    </recommendedName>
    <domain>
        <recommendedName>
            <fullName evidence="1">Methylenetetrahydrofolate dehydrogenase</fullName>
            <ecNumber evidence="1">1.5.1.5</ecNumber>
        </recommendedName>
    </domain>
    <domain>
        <recommendedName>
            <fullName evidence="1">Methenyltetrahydrofolate cyclohydrolase</fullName>
            <ecNumber evidence="1">3.5.4.9</ecNumber>
        </recommendedName>
    </domain>
</protein>
<accession>A5I112</accession>
<accession>A7G2R7</accession>
<name>FOLD_CLOBH</name>
<organism>
    <name type="scientific">Clostridium botulinum (strain Hall / ATCC 3502 / NCTC 13319 / Type A)</name>
    <dbReference type="NCBI Taxonomy" id="441771"/>
    <lineage>
        <taxon>Bacteria</taxon>
        <taxon>Bacillati</taxon>
        <taxon>Bacillota</taxon>
        <taxon>Clostridia</taxon>
        <taxon>Eubacteriales</taxon>
        <taxon>Clostridiaceae</taxon>
        <taxon>Clostridium</taxon>
    </lineage>
</organism>
<comment type="function">
    <text evidence="1">Catalyzes the oxidation of 5,10-methylenetetrahydrofolate to 5,10-methenyltetrahydrofolate and then the hydrolysis of 5,10-methenyltetrahydrofolate to 10-formyltetrahydrofolate.</text>
</comment>
<comment type="catalytic activity">
    <reaction evidence="1">
        <text>(6R)-5,10-methylene-5,6,7,8-tetrahydrofolate + NADP(+) = (6R)-5,10-methenyltetrahydrofolate + NADPH</text>
        <dbReference type="Rhea" id="RHEA:22812"/>
        <dbReference type="ChEBI" id="CHEBI:15636"/>
        <dbReference type="ChEBI" id="CHEBI:57455"/>
        <dbReference type="ChEBI" id="CHEBI:57783"/>
        <dbReference type="ChEBI" id="CHEBI:58349"/>
        <dbReference type="EC" id="1.5.1.5"/>
    </reaction>
</comment>
<comment type="catalytic activity">
    <reaction evidence="1">
        <text>(6R)-5,10-methenyltetrahydrofolate + H2O = (6R)-10-formyltetrahydrofolate + H(+)</text>
        <dbReference type="Rhea" id="RHEA:23700"/>
        <dbReference type="ChEBI" id="CHEBI:15377"/>
        <dbReference type="ChEBI" id="CHEBI:15378"/>
        <dbReference type="ChEBI" id="CHEBI:57455"/>
        <dbReference type="ChEBI" id="CHEBI:195366"/>
        <dbReference type="EC" id="3.5.4.9"/>
    </reaction>
</comment>
<comment type="pathway">
    <text evidence="1">One-carbon metabolism; tetrahydrofolate interconversion.</text>
</comment>
<comment type="subunit">
    <text evidence="1">Homodimer.</text>
</comment>
<comment type="similarity">
    <text evidence="1">Belongs to the tetrahydrofolate dehydrogenase/cyclohydrolase family.</text>
</comment>
<reference key="1">
    <citation type="journal article" date="2007" name="Genome Res.">
        <title>Genome sequence of a proteolytic (Group I) Clostridium botulinum strain Hall A and comparative analysis of the clostridial genomes.</title>
        <authorList>
            <person name="Sebaihia M."/>
            <person name="Peck M.W."/>
            <person name="Minton N.P."/>
            <person name="Thomson N.R."/>
            <person name="Holden M.T.G."/>
            <person name="Mitchell W.J."/>
            <person name="Carter A.T."/>
            <person name="Bentley S.D."/>
            <person name="Mason D.R."/>
            <person name="Crossman L."/>
            <person name="Paul C.J."/>
            <person name="Ivens A."/>
            <person name="Wells-Bennik M.H.J."/>
            <person name="Davis I.J."/>
            <person name="Cerdeno-Tarraga A.M."/>
            <person name="Churcher C."/>
            <person name="Quail M.A."/>
            <person name="Chillingworth T."/>
            <person name="Feltwell T."/>
            <person name="Fraser A."/>
            <person name="Goodhead I."/>
            <person name="Hance Z."/>
            <person name="Jagels K."/>
            <person name="Larke N."/>
            <person name="Maddison M."/>
            <person name="Moule S."/>
            <person name="Mungall K."/>
            <person name="Norbertczak H."/>
            <person name="Rabbinowitsch E."/>
            <person name="Sanders M."/>
            <person name="Simmonds M."/>
            <person name="White B."/>
            <person name="Whithead S."/>
            <person name="Parkhill J."/>
        </authorList>
    </citation>
    <scope>NUCLEOTIDE SEQUENCE [LARGE SCALE GENOMIC DNA]</scope>
    <source>
        <strain>Hall / ATCC 3502 / NCTC 13319 / Type A</strain>
    </source>
</reference>
<reference key="2">
    <citation type="journal article" date="2007" name="PLoS ONE">
        <title>Analysis of the neurotoxin complex genes in Clostridium botulinum A1-A4 and B1 strains: BoNT/A3, /Ba4 and /B1 clusters are located within plasmids.</title>
        <authorList>
            <person name="Smith T.J."/>
            <person name="Hill K.K."/>
            <person name="Foley B.T."/>
            <person name="Detter J.C."/>
            <person name="Munk A.C."/>
            <person name="Bruce D.C."/>
            <person name="Doggett N.A."/>
            <person name="Smith L.A."/>
            <person name="Marks J.D."/>
            <person name="Xie G."/>
            <person name="Brettin T.S."/>
        </authorList>
    </citation>
    <scope>NUCLEOTIDE SEQUENCE [LARGE SCALE GENOMIC DNA]</scope>
    <source>
        <strain>Hall / ATCC 3502 / NCTC 13319 / Type A</strain>
    </source>
</reference>
<proteinExistence type="inferred from homology"/>
<feature type="chain" id="PRO_1000069238" description="Bifunctional protein FolD">
    <location>
        <begin position="1"/>
        <end position="282"/>
    </location>
</feature>
<feature type="binding site" evidence="1">
    <location>
        <begin position="165"/>
        <end position="167"/>
    </location>
    <ligand>
        <name>NADP(+)</name>
        <dbReference type="ChEBI" id="CHEBI:58349"/>
    </ligand>
</feature>
<feature type="binding site" evidence="1">
    <location>
        <position position="190"/>
    </location>
    <ligand>
        <name>NADP(+)</name>
        <dbReference type="ChEBI" id="CHEBI:58349"/>
    </ligand>
</feature>
<feature type="binding site" evidence="1">
    <location>
        <position position="231"/>
    </location>
    <ligand>
        <name>NADP(+)</name>
        <dbReference type="ChEBI" id="CHEBI:58349"/>
    </ligand>
</feature>
<gene>
    <name evidence="1" type="primary">folD</name>
    <name type="ordered locus">CBO1172</name>
    <name type="ordered locus">CLC_1215</name>
</gene>
<dbReference type="EC" id="1.5.1.5" evidence="1"/>
<dbReference type="EC" id="3.5.4.9" evidence="1"/>
<dbReference type="EMBL" id="CP000727">
    <property type="protein sequence ID" value="ABS35941.1"/>
    <property type="molecule type" value="Genomic_DNA"/>
</dbReference>
<dbReference type="EMBL" id="AM412317">
    <property type="protein sequence ID" value="CAL82723.1"/>
    <property type="molecule type" value="Genomic_DNA"/>
</dbReference>
<dbReference type="RefSeq" id="WP_011948819.1">
    <property type="nucleotide sequence ID" value="NC_009698.1"/>
</dbReference>
<dbReference type="RefSeq" id="YP_001253699.1">
    <property type="nucleotide sequence ID" value="NC_009495.1"/>
</dbReference>
<dbReference type="RefSeq" id="YP_001387082.1">
    <property type="nucleotide sequence ID" value="NC_009698.1"/>
</dbReference>
<dbReference type="SMR" id="A5I112"/>
<dbReference type="GeneID" id="5185427"/>
<dbReference type="KEGG" id="cbh:CLC_1215"/>
<dbReference type="KEGG" id="cbo:CBO1172"/>
<dbReference type="PATRIC" id="fig|413999.7.peg.1160"/>
<dbReference type="HOGENOM" id="CLU_034045_2_1_9"/>
<dbReference type="UniPathway" id="UPA00193"/>
<dbReference type="PRO" id="PR:A5I112"/>
<dbReference type="Proteomes" id="UP000001986">
    <property type="component" value="Chromosome"/>
</dbReference>
<dbReference type="GO" id="GO:0005829">
    <property type="term" value="C:cytosol"/>
    <property type="evidence" value="ECO:0000318"/>
    <property type="project" value="GO_Central"/>
</dbReference>
<dbReference type="GO" id="GO:0004477">
    <property type="term" value="F:methenyltetrahydrofolate cyclohydrolase activity"/>
    <property type="evidence" value="ECO:0000318"/>
    <property type="project" value="GO_Central"/>
</dbReference>
<dbReference type="GO" id="GO:0004488">
    <property type="term" value="F:methylenetetrahydrofolate dehydrogenase (NADP+) activity"/>
    <property type="evidence" value="ECO:0000318"/>
    <property type="project" value="GO_Central"/>
</dbReference>
<dbReference type="GO" id="GO:0000105">
    <property type="term" value="P:L-histidine biosynthetic process"/>
    <property type="evidence" value="ECO:0007669"/>
    <property type="project" value="UniProtKB-KW"/>
</dbReference>
<dbReference type="GO" id="GO:0009086">
    <property type="term" value="P:methionine biosynthetic process"/>
    <property type="evidence" value="ECO:0007669"/>
    <property type="project" value="UniProtKB-KW"/>
</dbReference>
<dbReference type="GO" id="GO:0006164">
    <property type="term" value="P:purine nucleotide biosynthetic process"/>
    <property type="evidence" value="ECO:0007669"/>
    <property type="project" value="UniProtKB-KW"/>
</dbReference>
<dbReference type="GO" id="GO:0035999">
    <property type="term" value="P:tetrahydrofolate interconversion"/>
    <property type="evidence" value="ECO:0000318"/>
    <property type="project" value="GO_Central"/>
</dbReference>
<dbReference type="CDD" id="cd01080">
    <property type="entry name" value="NAD_bind_m-THF_DH_Cyclohyd"/>
    <property type="match status" value="1"/>
</dbReference>
<dbReference type="FunFam" id="3.40.50.720:FF:000094">
    <property type="entry name" value="Bifunctional protein FolD"/>
    <property type="match status" value="1"/>
</dbReference>
<dbReference type="FunFam" id="3.40.50.10860:FF:000005">
    <property type="entry name" value="C-1-tetrahydrofolate synthase, cytoplasmic, putative"/>
    <property type="match status" value="1"/>
</dbReference>
<dbReference type="Gene3D" id="3.40.50.10860">
    <property type="entry name" value="Leucine Dehydrogenase, chain A, domain 1"/>
    <property type="match status" value="1"/>
</dbReference>
<dbReference type="Gene3D" id="3.40.50.720">
    <property type="entry name" value="NAD(P)-binding Rossmann-like Domain"/>
    <property type="match status" value="1"/>
</dbReference>
<dbReference type="HAMAP" id="MF_01576">
    <property type="entry name" value="THF_DHG_CYH"/>
    <property type="match status" value="1"/>
</dbReference>
<dbReference type="InterPro" id="IPR046346">
    <property type="entry name" value="Aminoacid_DH-like_N_sf"/>
</dbReference>
<dbReference type="InterPro" id="IPR036291">
    <property type="entry name" value="NAD(P)-bd_dom_sf"/>
</dbReference>
<dbReference type="InterPro" id="IPR000672">
    <property type="entry name" value="THF_DH/CycHdrlase"/>
</dbReference>
<dbReference type="InterPro" id="IPR020630">
    <property type="entry name" value="THF_DH/CycHdrlase_cat_dom"/>
</dbReference>
<dbReference type="InterPro" id="IPR020631">
    <property type="entry name" value="THF_DH/CycHdrlase_NAD-bd_dom"/>
</dbReference>
<dbReference type="PANTHER" id="PTHR48099:SF5">
    <property type="entry name" value="C-1-TETRAHYDROFOLATE SYNTHASE, CYTOPLASMIC"/>
    <property type="match status" value="1"/>
</dbReference>
<dbReference type="PANTHER" id="PTHR48099">
    <property type="entry name" value="C-1-TETRAHYDROFOLATE SYNTHASE, CYTOPLASMIC-RELATED"/>
    <property type="match status" value="1"/>
</dbReference>
<dbReference type="Pfam" id="PF00763">
    <property type="entry name" value="THF_DHG_CYH"/>
    <property type="match status" value="1"/>
</dbReference>
<dbReference type="Pfam" id="PF02882">
    <property type="entry name" value="THF_DHG_CYH_C"/>
    <property type="match status" value="1"/>
</dbReference>
<dbReference type="PRINTS" id="PR00085">
    <property type="entry name" value="THFDHDRGNASE"/>
</dbReference>
<dbReference type="SUPFAM" id="SSF53223">
    <property type="entry name" value="Aminoacid dehydrogenase-like, N-terminal domain"/>
    <property type="match status" value="1"/>
</dbReference>
<dbReference type="SUPFAM" id="SSF51735">
    <property type="entry name" value="NAD(P)-binding Rossmann-fold domains"/>
    <property type="match status" value="1"/>
</dbReference>
<sequence length="282" mass="31696">MAKILYGNEVALKIKEDLNLRIDKLKEKNIIPKLAILRMGNKPDDIAYERSIIKSCEKLNIETKVEELNEDILEEDFLKLMESLNNEKEIHGILVFRPYPKHLNENIINSSIALNKDVDCMHPLNLERIFEGDLNGFMPCTPEAVIEILKYYDIDLKGKNIVIINRSMVVGKPLSMMVLSHNATVTICHSRTIDLPSITKKADIVVTAIGKAKLIKEEYFNEDSIVMDVSINIDENGKLCGDVDFENVKEKVGAITPVPKGVGSVTTTLLLKHIVDAAERNS</sequence>